<gene>
    <name evidence="1" type="primary">selA</name>
    <name type="ordered locus">DP1691</name>
</gene>
<comment type="function">
    <text evidence="1">Converts seryl-tRNA(Sec) to selenocysteinyl-tRNA(Sec) required for selenoprotein biosynthesis.</text>
</comment>
<comment type="catalytic activity">
    <reaction evidence="1">
        <text>L-seryl-tRNA(Sec) + selenophosphate + H(+) = L-selenocysteinyl-tRNA(Sec) + phosphate</text>
        <dbReference type="Rhea" id="RHEA:22728"/>
        <dbReference type="Rhea" id="RHEA-COMP:9742"/>
        <dbReference type="Rhea" id="RHEA-COMP:9743"/>
        <dbReference type="ChEBI" id="CHEBI:15378"/>
        <dbReference type="ChEBI" id="CHEBI:16144"/>
        <dbReference type="ChEBI" id="CHEBI:43474"/>
        <dbReference type="ChEBI" id="CHEBI:78533"/>
        <dbReference type="ChEBI" id="CHEBI:78573"/>
        <dbReference type="EC" id="2.9.1.1"/>
    </reaction>
</comment>
<comment type="cofactor">
    <cofactor evidence="1">
        <name>pyridoxal 5'-phosphate</name>
        <dbReference type="ChEBI" id="CHEBI:597326"/>
    </cofactor>
</comment>
<comment type="pathway">
    <text evidence="1">Aminoacyl-tRNA biosynthesis; selenocysteinyl-tRNA(Sec) biosynthesis; selenocysteinyl-tRNA(Sec) from L-seryl-tRNA(Sec) (bacterial route): step 1/1.</text>
</comment>
<comment type="subcellular location">
    <subcellularLocation>
        <location evidence="1">Cytoplasm</location>
    </subcellularLocation>
</comment>
<comment type="similarity">
    <text evidence="1">Belongs to the SelA family.</text>
</comment>
<dbReference type="EC" id="2.9.1.1" evidence="1"/>
<dbReference type="EMBL" id="CR522870">
    <property type="protein sequence ID" value="CAG36420.1"/>
    <property type="molecule type" value="Genomic_DNA"/>
</dbReference>
<dbReference type="RefSeq" id="WP_011188932.1">
    <property type="nucleotide sequence ID" value="NC_006138.1"/>
</dbReference>
<dbReference type="SMR" id="Q6AMK5"/>
<dbReference type="STRING" id="177439.DP1691"/>
<dbReference type="KEGG" id="dps:DP1691"/>
<dbReference type="eggNOG" id="COG1921">
    <property type="taxonomic scope" value="Bacteria"/>
</dbReference>
<dbReference type="HOGENOM" id="CLU_038142_1_0_7"/>
<dbReference type="OrthoDB" id="9787096at2"/>
<dbReference type="UniPathway" id="UPA00906">
    <property type="reaction ID" value="UER00896"/>
</dbReference>
<dbReference type="Proteomes" id="UP000000602">
    <property type="component" value="Chromosome"/>
</dbReference>
<dbReference type="GO" id="GO:0005737">
    <property type="term" value="C:cytoplasm"/>
    <property type="evidence" value="ECO:0007669"/>
    <property type="project" value="UniProtKB-SubCell"/>
</dbReference>
<dbReference type="GO" id="GO:0004125">
    <property type="term" value="F:L-seryl-tRNA(Sec) selenium transferase activity"/>
    <property type="evidence" value="ECO:0007669"/>
    <property type="project" value="UniProtKB-UniRule"/>
</dbReference>
<dbReference type="GO" id="GO:0001717">
    <property type="term" value="P:conversion of seryl-tRNAsec to selenocys-tRNAsec"/>
    <property type="evidence" value="ECO:0007669"/>
    <property type="project" value="UniProtKB-UniRule"/>
</dbReference>
<dbReference type="GO" id="GO:0001514">
    <property type="term" value="P:selenocysteine incorporation"/>
    <property type="evidence" value="ECO:0007669"/>
    <property type="project" value="UniProtKB-UniRule"/>
</dbReference>
<dbReference type="Gene3D" id="3.90.1150.180">
    <property type="match status" value="1"/>
</dbReference>
<dbReference type="Gene3D" id="3.40.640.10">
    <property type="entry name" value="Type I PLP-dependent aspartate aminotransferase-like (Major domain)"/>
    <property type="match status" value="1"/>
</dbReference>
<dbReference type="HAMAP" id="MF_00423">
    <property type="entry name" value="SelA"/>
    <property type="match status" value="1"/>
</dbReference>
<dbReference type="InterPro" id="IPR015424">
    <property type="entry name" value="PyrdxlP-dep_Trfase"/>
</dbReference>
<dbReference type="InterPro" id="IPR015421">
    <property type="entry name" value="PyrdxlP-dep_Trfase_major"/>
</dbReference>
<dbReference type="InterPro" id="IPR018319">
    <property type="entry name" value="SelA-like"/>
</dbReference>
<dbReference type="InterPro" id="IPR004534">
    <property type="entry name" value="SelA_trans"/>
</dbReference>
<dbReference type="NCBIfam" id="TIGR00474">
    <property type="entry name" value="selA"/>
    <property type="match status" value="1"/>
</dbReference>
<dbReference type="PANTHER" id="PTHR32328">
    <property type="entry name" value="L-SERYL-TRNA(SEC) SELENIUM TRANSFERASE"/>
    <property type="match status" value="1"/>
</dbReference>
<dbReference type="PANTHER" id="PTHR32328:SF0">
    <property type="entry name" value="L-SERYL-TRNA(SEC) SELENIUM TRANSFERASE"/>
    <property type="match status" value="1"/>
</dbReference>
<dbReference type="Pfam" id="PF03841">
    <property type="entry name" value="SelA"/>
    <property type="match status" value="1"/>
</dbReference>
<dbReference type="SUPFAM" id="SSF53383">
    <property type="entry name" value="PLP-dependent transferases"/>
    <property type="match status" value="1"/>
</dbReference>
<protein>
    <recommendedName>
        <fullName evidence="1">L-seryl-tRNA(Sec) selenium transferase</fullName>
        <ecNumber evidence="1">2.9.1.1</ecNumber>
    </recommendedName>
    <alternativeName>
        <fullName evidence="1">Selenocysteine synthase</fullName>
        <shortName evidence="1">Sec synthase</shortName>
    </alternativeName>
    <alternativeName>
        <fullName evidence="1">Selenocysteinyl-tRNA(Sec) synthase</fullName>
    </alternativeName>
</protein>
<feature type="chain" id="PRO_1000050362" description="L-seryl-tRNA(Sec) selenium transferase">
    <location>
        <begin position="1"/>
        <end position="466"/>
    </location>
</feature>
<feature type="modified residue" description="N6-(pyridoxal phosphate)lysine" evidence="1">
    <location>
        <position position="293"/>
    </location>
</feature>
<organism>
    <name type="scientific">Desulfotalea psychrophila (strain LSv54 / DSM 12343)</name>
    <dbReference type="NCBI Taxonomy" id="177439"/>
    <lineage>
        <taxon>Bacteria</taxon>
        <taxon>Pseudomonadati</taxon>
        <taxon>Thermodesulfobacteriota</taxon>
        <taxon>Desulfobulbia</taxon>
        <taxon>Desulfobulbales</taxon>
        <taxon>Desulfocapsaceae</taxon>
        <taxon>Desulfotalea</taxon>
    </lineage>
</organism>
<reference key="1">
    <citation type="journal article" date="2004" name="Environ. Microbiol.">
        <title>The genome of Desulfotalea psychrophila, a sulfate-reducing bacterium from permanently cold Arctic sediments.</title>
        <authorList>
            <person name="Rabus R."/>
            <person name="Ruepp A."/>
            <person name="Frickey T."/>
            <person name="Rattei T."/>
            <person name="Fartmann B."/>
            <person name="Stark M."/>
            <person name="Bauer M."/>
            <person name="Zibat A."/>
            <person name="Lombardot T."/>
            <person name="Becker I."/>
            <person name="Amann J."/>
            <person name="Gellner K."/>
            <person name="Teeling H."/>
            <person name="Leuschner W.D."/>
            <person name="Gloeckner F.-O."/>
            <person name="Lupas A.N."/>
            <person name="Amann R."/>
            <person name="Klenk H.-P."/>
        </authorList>
    </citation>
    <scope>NUCLEOTIDE SEQUENCE [LARGE SCALE GENOMIC DNA]</scope>
    <source>
        <strain>DSM 12343 / LSv54</strain>
    </source>
</reference>
<evidence type="ECO:0000255" key="1">
    <source>
        <dbReference type="HAMAP-Rule" id="MF_00423"/>
    </source>
</evidence>
<name>SELA_DESPS</name>
<proteinExistence type="inferred from homology"/>
<accession>Q6AMK5</accession>
<keyword id="KW-0963">Cytoplasm</keyword>
<keyword id="KW-0648">Protein biosynthesis</keyword>
<keyword id="KW-0663">Pyridoxal phosphate</keyword>
<keyword id="KW-1185">Reference proteome</keyword>
<keyword id="KW-0711">Selenium</keyword>
<keyword id="KW-0808">Transferase</keyword>
<sequence length="466" mass="51599">MPKNNLLRTLPKVDESIAQLRSTGVAYSSDFVLKKSVQTCIARERQGILAGKITEKRAEDSWHACFLKELKERQAPNLRRMINGTGVVIHTNLGRSLLSSQVAERLAQTASYYSNLEFDLATGKRGSRYSLVEDTICELTGAEAALVVNNNAAAVFLALDALCRGTEVIVSRGQLVEIGGSFRIPDVMARSGADLVEVGATNRTHLYDYEDAISEQTSMLLRVHTSNFRIIGFTSEVPAEEMVGLARKKNLLTMEDLGSGSLIDLTSYGFPKEPTVQELVKAGVDVVTFSGDKLLGGPQAGIIVGSKSVVERIKKSPMNRAFRVDKFTLAALEVVLRSYYDSRQALQEIPTLRMLTTGKDVLLKRARRISRRLSAKLKEKCTLRIVPTMSRVGGGAFPEHDLASWAVAFRPEHIRLSEIEKRLRKLNTPIIGRLENEKFLLDVRTIQDDEVGLLCSLLLEFFLEAS</sequence>